<feature type="chain" id="PRO_1000100048" description="Dihydroorotase">
    <location>
        <begin position="1"/>
        <end position="348"/>
    </location>
</feature>
<feature type="active site" evidence="1">
    <location>
        <position position="251"/>
    </location>
</feature>
<feature type="binding site" evidence="1">
    <location>
        <position position="17"/>
    </location>
    <ligand>
        <name>Zn(2+)</name>
        <dbReference type="ChEBI" id="CHEBI:29105"/>
        <label>1</label>
    </ligand>
</feature>
<feature type="binding site" evidence="1">
    <location>
        <begin position="19"/>
        <end position="21"/>
    </location>
    <ligand>
        <name>substrate</name>
    </ligand>
</feature>
<feature type="binding site" evidence="1">
    <location>
        <position position="19"/>
    </location>
    <ligand>
        <name>Zn(2+)</name>
        <dbReference type="ChEBI" id="CHEBI:29105"/>
        <label>1</label>
    </ligand>
</feature>
<feature type="binding site" evidence="1">
    <location>
        <position position="45"/>
    </location>
    <ligand>
        <name>substrate</name>
    </ligand>
</feature>
<feature type="binding site" description="via carbamate group" evidence="1">
    <location>
        <position position="103"/>
    </location>
    <ligand>
        <name>Zn(2+)</name>
        <dbReference type="ChEBI" id="CHEBI:29105"/>
        <label>1</label>
    </ligand>
</feature>
<feature type="binding site" description="via carbamate group" evidence="1">
    <location>
        <position position="103"/>
    </location>
    <ligand>
        <name>Zn(2+)</name>
        <dbReference type="ChEBI" id="CHEBI:29105"/>
        <label>2</label>
    </ligand>
</feature>
<feature type="binding site" evidence="1">
    <location>
        <position position="140"/>
    </location>
    <ligand>
        <name>substrate</name>
    </ligand>
</feature>
<feature type="binding site" evidence="1">
    <location>
        <position position="140"/>
    </location>
    <ligand>
        <name>Zn(2+)</name>
        <dbReference type="ChEBI" id="CHEBI:29105"/>
        <label>2</label>
    </ligand>
</feature>
<feature type="binding site" evidence="1">
    <location>
        <position position="178"/>
    </location>
    <ligand>
        <name>Zn(2+)</name>
        <dbReference type="ChEBI" id="CHEBI:29105"/>
        <label>2</label>
    </ligand>
</feature>
<feature type="binding site" evidence="1">
    <location>
        <position position="223"/>
    </location>
    <ligand>
        <name>substrate</name>
    </ligand>
</feature>
<feature type="binding site" evidence="1">
    <location>
        <position position="251"/>
    </location>
    <ligand>
        <name>Zn(2+)</name>
        <dbReference type="ChEBI" id="CHEBI:29105"/>
        <label>1</label>
    </ligand>
</feature>
<feature type="binding site" evidence="1">
    <location>
        <position position="255"/>
    </location>
    <ligand>
        <name>substrate</name>
    </ligand>
</feature>
<feature type="binding site" evidence="1">
    <location>
        <position position="267"/>
    </location>
    <ligand>
        <name>substrate</name>
    </ligand>
</feature>
<feature type="modified residue" description="N6-carboxylysine" evidence="1">
    <location>
        <position position="103"/>
    </location>
</feature>
<proteinExistence type="inferred from homology"/>
<accession>B5XXJ5</accession>
<evidence type="ECO:0000255" key="1">
    <source>
        <dbReference type="HAMAP-Rule" id="MF_00219"/>
    </source>
</evidence>
<organism>
    <name type="scientific">Klebsiella pneumoniae (strain 342)</name>
    <dbReference type="NCBI Taxonomy" id="507522"/>
    <lineage>
        <taxon>Bacteria</taxon>
        <taxon>Pseudomonadati</taxon>
        <taxon>Pseudomonadota</taxon>
        <taxon>Gammaproteobacteria</taxon>
        <taxon>Enterobacterales</taxon>
        <taxon>Enterobacteriaceae</taxon>
        <taxon>Klebsiella/Raoultella group</taxon>
        <taxon>Klebsiella</taxon>
        <taxon>Klebsiella pneumoniae complex</taxon>
    </lineage>
</organism>
<dbReference type="EC" id="3.5.2.3" evidence="1"/>
<dbReference type="EMBL" id="CP000964">
    <property type="protein sequence ID" value="ACI09089.1"/>
    <property type="molecule type" value="Genomic_DNA"/>
</dbReference>
<dbReference type="SMR" id="B5XXJ5"/>
<dbReference type="MEROPS" id="M38.A02"/>
<dbReference type="KEGG" id="kpe:KPK_3483"/>
<dbReference type="HOGENOM" id="CLU_041558_1_0_6"/>
<dbReference type="UniPathway" id="UPA00070">
    <property type="reaction ID" value="UER00117"/>
</dbReference>
<dbReference type="Proteomes" id="UP000001734">
    <property type="component" value="Chromosome"/>
</dbReference>
<dbReference type="GO" id="GO:0005829">
    <property type="term" value="C:cytosol"/>
    <property type="evidence" value="ECO:0007669"/>
    <property type="project" value="TreeGrafter"/>
</dbReference>
<dbReference type="GO" id="GO:0004151">
    <property type="term" value="F:dihydroorotase activity"/>
    <property type="evidence" value="ECO:0007669"/>
    <property type="project" value="UniProtKB-UniRule"/>
</dbReference>
<dbReference type="GO" id="GO:0008270">
    <property type="term" value="F:zinc ion binding"/>
    <property type="evidence" value="ECO:0007669"/>
    <property type="project" value="UniProtKB-UniRule"/>
</dbReference>
<dbReference type="GO" id="GO:0006207">
    <property type="term" value="P:'de novo' pyrimidine nucleobase biosynthetic process"/>
    <property type="evidence" value="ECO:0007669"/>
    <property type="project" value="TreeGrafter"/>
</dbReference>
<dbReference type="GO" id="GO:0044205">
    <property type="term" value="P:'de novo' UMP biosynthetic process"/>
    <property type="evidence" value="ECO:0007669"/>
    <property type="project" value="UniProtKB-UniRule"/>
</dbReference>
<dbReference type="CDD" id="cd01294">
    <property type="entry name" value="DHOase"/>
    <property type="match status" value="1"/>
</dbReference>
<dbReference type="FunFam" id="3.20.20.140:FF:000006">
    <property type="entry name" value="Dihydroorotase"/>
    <property type="match status" value="1"/>
</dbReference>
<dbReference type="Gene3D" id="3.20.20.140">
    <property type="entry name" value="Metal-dependent hydrolases"/>
    <property type="match status" value="1"/>
</dbReference>
<dbReference type="HAMAP" id="MF_00219">
    <property type="entry name" value="PyrC_classII"/>
    <property type="match status" value="1"/>
</dbReference>
<dbReference type="InterPro" id="IPR006680">
    <property type="entry name" value="Amidohydro-rel"/>
</dbReference>
<dbReference type="InterPro" id="IPR004721">
    <property type="entry name" value="DHOdimr"/>
</dbReference>
<dbReference type="InterPro" id="IPR002195">
    <property type="entry name" value="Dihydroorotase_CS"/>
</dbReference>
<dbReference type="InterPro" id="IPR032466">
    <property type="entry name" value="Metal_Hydrolase"/>
</dbReference>
<dbReference type="NCBIfam" id="TIGR00856">
    <property type="entry name" value="pyrC_dimer"/>
    <property type="match status" value="1"/>
</dbReference>
<dbReference type="PANTHER" id="PTHR43137">
    <property type="entry name" value="DIHYDROOROTASE"/>
    <property type="match status" value="1"/>
</dbReference>
<dbReference type="PANTHER" id="PTHR43137:SF1">
    <property type="entry name" value="DIHYDROOROTASE"/>
    <property type="match status" value="1"/>
</dbReference>
<dbReference type="Pfam" id="PF01979">
    <property type="entry name" value="Amidohydro_1"/>
    <property type="match status" value="1"/>
</dbReference>
<dbReference type="PIRSF" id="PIRSF001237">
    <property type="entry name" value="DHOdimr"/>
    <property type="match status" value="1"/>
</dbReference>
<dbReference type="SUPFAM" id="SSF51556">
    <property type="entry name" value="Metallo-dependent hydrolases"/>
    <property type="match status" value="1"/>
</dbReference>
<dbReference type="PROSITE" id="PS00483">
    <property type="entry name" value="DIHYDROOROTASE_2"/>
    <property type="match status" value="1"/>
</dbReference>
<name>PYRC_KLEP3</name>
<reference key="1">
    <citation type="journal article" date="2008" name="PLoS Genet.">
        <title>Complete genome sequence of the N2-fixing broad host range endophyte Klebsiella pneumoniae 342 and virulence predictions verified in mice.</title>
        <authorList>
            <person name="Fouts D.E."/>
            <person name="Tyler H.L."/>
            <person name="DeBoy R.T."/>
            <person name="Daugherty S."/>
            <person name="Ren Q."/>
            <person name="Badger J.H."/>
            <person name="Durkin A.S."/>
            <person name="Huot H."/>
            <person name="Shrivastava S."/>
            <person name="Kothari S."/>
            <person name="Dodson R.J."/>
            <person name="Mohamoud Y."/>
            <person name="Khouri H."/>
            <person name="Roesch L.F.W."/>
            <person name="Krogfelt K.A."/>
            <person name="Struve C."/>
            <person name="Triplett E.W."/>
            <person name="Methe B.A."/>
        </authorList>
    </citation>
    <scope>NUCLEOTIDE SEQUENCE [LARGE SCALE GENOMIC DNA]</scope>
    <source>
        <strain>342</strain>
    </source>
</reference>
<comment type="function">
    <text evidence="1">Catalyzes the reversible cyclization of carbamoyl aspartate to dihydroorotate.</text>
</comment>
<comment type="catalytic activity">
    <reaction evidence="1">
        <text>(S)-dihydroorotate + H2O = N-carbamoyl-L-aspartate + H(+)</text>
        <dbReference type="Rhea" id="RHEA:24296"/>
        <dbReference type="ChEBI" id="CHEBI:15377"/>
        <dbReference type="ChEBI" id="CHEBI:15378"/>
        <dbReference type="ChEBI" id="CHEBI:30864"/>
        <dbReference type="ChEBI" id="CHEBI:32814"/>
        <dbReference type="EC" id="3.5.2.3"/>
    </reaction>
</comment>
<comment type="cofactor">
    <cofactor evidence="1">
        <name>Zn(2+)</name>
        <dbReference type="ChEBI" id="CHEBI:29105"/>
    </cofactor>
    <text evidence="1">Binds 2 Zn(2+) ions per subunit.</text>
</comment>
<comment type="pathway">
    <text evidence="1">Pyrimidine metabolism; UMP biosynthesis via de novo pathway; (S)-dihydroorotate from bicarbonate: step 3/3.</text>
</comment>
<comment type="subunit">
    <text evidence="1">Homodimer.</text>
</comment>
<comment type="similarity">
    <text evidence="1">Belongs to the metallo-dependent hydrolases superfamily. DHOase family. Class II DHOase subfamily.</text>
</comment>
<keyword id="KW-0378">Hydrolase</keyword>
<keyword id="KW-0479">Metal-binding</keyword>
<keyword id="KW-0665">Pyrimidine biosynthesis</keyword>
<keyword id="KW-0862">Zinc</keyword>
<sequence length="348" mass="38863">MTAQPQVLKIRRPDDWHIHLRDDDMLKTVVPYTSEFYGRAIVMPNLVPPVTTVAAAIAYRQRIMDAVPAGHDFTPLMTCYLTDSLDPAELERGFNEGVFTAAKLYPANATTNSSHGVTSTDAIMPVLERMEKLGMPLLVHGEVTHAEIDIFDREARFIDTVMEPLRQRLPGLKVVFEHITTKDAAEYVRDGNELLAATITPQHLMFNRNHMLVGGIRPHLYCLPVLKRNIHQQALRELVASGFSRAFLGTDSAPHARHRKEASCGCAGCFNAPTALGSYATVFEEMNALQHFEAFCSLNGPRFYGLPVNESYVELVREETTVVDSIALPNDSLVPFLAGETVRWTMKR</sequence>
<gene>
    <name evidence="1" type="primary">pyrC</name>
    <name type="ordered locus">KPK_3483</name>
</gene>
<protein>
    <recommendedName>
        <fullName evidence="1">Dihydroorotase</fullName>
        <shortName evidence="1">DHOase</shortName>
        <ecNumber evidence="1">3.5.2.3</ecNumber>
    </recommendedName>
</protein>